<keyword id="KW-0963">Cytoplasm</keyword>
<keyword id="KW-0496">Mitochondrion</keyword>
<keyword id="KW-1185">Reference proteome</keyword>
<keyword id="KW-0809">Transit peptide</keyword>
<sequence length="269" mass="30616">MNSLRVLKIFRSVSRSIRIPASNGCINLGRNAYRVQLAKAPFSFSSIRRSSHTAGNPRSKLINALSSEIDYEKNQVLSEISLPPVNYDIEDVQGSAVVVLKAKHGDENIRITMNVSQDVTDAVPEEQDFTEFEDEQELQNQGESAEDEFPNEDLGRFQPCTIEISKPGNGALVFEATALDDGFDIENIYFSKDIDMLTSDSLEAEWKRRKQYLGPSFKELDPELQDLFHSYLEERKIDESLSSFIVSFGLTKELKEYINWLESVRQFLK</sequence>
<organism>
    <name type="scientific">Schizosaccharomyces pombe (strain 972 / ATCC 24843)</name>
    <name type="common">Fission yeast</name>
    <dbReference type="NCBI Taxonomy" id="284812"/>
    <lineage>
        <taxon>Eukaryota</taxon>
        <taxon>Fungi</taxon>
        <taxon>Dikarya</taxon>
        <taxon>Ascomycota</taxon>
        <taxon>Taphrinomycotina</taxon>
        <taxon>Schizosaccharomycetes</taxon>
        <taxon>Schizosaccharomycetales</taxon>
        <taxon>Schizosaccharomycetaceae</taxon>
        <taxon>Schizosaccharomyces</taxon>
    </lineage>
</organism>
<gene>
    <name type="ORF">SPBC776.07</name>
</gene>
<reference key="1">
    <citation type="journal article" date="2002" name="Nature">
        <title>The genome sequence of Schizosaccharomyces pombe.</title>
        <authorList>
            <person name="Wood V."/>
            <person name="Gwilliam R."/>
            <person name="Rajandream M.A."/>
            <person name="Lyne M.H."/>
            <person name="Lyne R."/>
            <person name="Stewart A."/>
            <person name="Sgouros J.G."/>
            <person name="Peat N."/>
            <person name="Hayles J."/>
            <person name="Baker S.G."/>
            <person name="Basham D."/>
            <person name="Bowman S."/>
            <person name="Brooks K."/>
            <person name="Brown D."/>
            <person name="Brown S."/>
            <person name="Chillingworth T."/>
            <person name="Churcher C.M."/>
            <person name="Collins M."/>
            <person name="Connor R."/>
            <person name="Cronin A."/>
            <person name="Davis P."/>
            <person name="Feltwell T."/>
            <person name="Fraser A."/>
            <person name="Gentles S."/>
            <person name="Goble A."/>
            <person name="Hamlin N."/>
            <person name="Harris D.E."/>
            <person name="Hidalgo J."/>
            <person name="Hodgson G."/>
            <person name="Holroyd S."/>
            <person name="Hornsby T."/>
            <person name="Howarth S."/>
            <person name="Huckle E.J."/>
            <person name="Hunt S."/>
            <person name="Jagels K."/>
            <person name="James K.D."/>
            <person name="Jones L."/>
            <person name="Jones M."/>
            <person name="Leather S."/>
            <person name="McDonald S."/>
            <person name="McLean J."/>
            <person name="Mooney P."/>
            <person name="Moule S."/>
            <person name="Mungall K.L."/>
            <person name="Murphy L.D."/>
            <person name="Niblett D."/>
            <person name="Odell C."/>
            <person name="Oliver K."/>
            <person name="O'Neil S."/>
            <person name="Pearson D."/>
            <person name="Quail M.A."/>
            <person name="Rabbinowitsch E."/>
            <person name="Rutherford K.M."/>
            <person name="Rutter S."/>
            <person name="Saunders D."/>
            <person name="Seeger K."/>
            <person name="Sharp S."/>
            <person name="Skelton J."/>
            <person name="Simmonds M.N."/>
            <person name="Squares R."/>
            <person name="Squares S."/>
            <person name="Stevens K."/>
            <person name="Taylor K."/>
            <person name="Taylor R.G."/>
            <person name="Tivey A."/>
            <person name="Walsh S.V."/>
            <person name="Warren T."/>
            <person name="Whitehead S."/>
            <person name="Woodward J.R."/>
            <person name="Volckaert G."/>
            <person name="Aert R."/>
            <person name="Robben J."/>
            <person name="Grymonprez B."/>
            <person name="Weltjens I."/>
            <person name="Vanstreels E."/>
            <person name="Rieger M."/>
            <person name="Schaefer M."/>
            <person name="Mueller-Auer S."/>
            <person name="Gabel C."/>
            <person name="Fuchs M."/>
            <person name="Duesterhoeft A."/>
            <person name="Fritzc C."/>
            <person name="Holzer E."/>
            <person name="Moestl D."/>
            <person name="Hilbert H."/>
            <person name="Borzym K."/>
            <person name="Langer I."/>
            <person name="Beck A."/>
            <person name="Lehrach H."/>
            <person name="Reinhardt R."/>
            <person name="Pohl T.M."/>
            <person name="Eger P."/>
            <person name="Zimmermann W."/>
            <person name="Wedler H."/>
            <person name="Wambutt R."/>
            <person name="Purnelle B."/>
            <person name="Goffeau A."/>
            <person name="Cadieu E."/>
            <person name="Dreano S."/>
            <person name="Gloux S."/>
            <person name="Lelaure V."/>
            <person name="Mottier S."/>
            <person name="Galibert F."/>
            <person name="Aves S.J."/>
            <person name="Xiang Z."/>
            <person name="Hunt C."/>
            <person name="Moore K."/>
            <person name="Hurst S.M."/>
            <person name="Lucas M."/>
            <person name="Rochet M."/>
            <person name="Gaillardin C."/>
            <person name="Tallada V.A."/>
            <person name="Garzon A."/>
            <person name="Thode G."/>
            <person name="Daga R.R."/>
            <person name="Cruzado L."/>
            <person name="Jimenez J."/>
            <person name="Sanchez M."/>
            <person name="del Rey F."/>
            <person name="Benito J."/>
            <person name="Dominguez A."/>
            <person name="Revuelta J.L."/>
            <person name="Moreno S."/>
            <person name="Armstrong J."/>
            <person name="Forsburg S.L."/>
            <person name="Cerutti L."/>
            <person name="Lowe T."/>
            <person name="McCombie W.R."/>
            <person name="Paulsen I."/>
            <person name="Potashkin J."/>
            <person name="Shpakovski G.V."/>
            <person name="Ussery D."/>
            <person name="Barrell B.G."/>
            <person name="Nurse P."/>
        </authorList>
    </citation>
    <scope>NUCLEOTIDE SEQUENCE [LARGE SCALE GENOMIC DNA]</scope>
    <source>
        <strain>972 / ATCC 24843</strain>
    </source>
</reference>
<reference key="2">
    <citation type="journal article" date="2006" name="Nat. Biotechnol.">
        <title>ORFeome cloning and global analysis of protein localization in the fission yeast Schizosaccharomyces pombe.</title>
        <authorList>
            <person name="Matsuyama A."/>
            <person name="Arai R."/>
            <person name="Yashiroda Y."/>
            <person name="Shirai A."/>
            <person name="Kamata A."/>
            <person name="Sekido S."/>
            <person name="Kobayashi Y."/>
            <person name="Hashimoto A."/>
            <person name="Hamamoto M."/>
            <person name="Hiraoka Y."/>
            <person name="Horinouchi S."/>
            <person name="Yoshida M."/>
        </authorList>
    </citation>
    <scope>SUBCELLULAR LOCATION [LARGE SCALE ANALYSIS]</scope>
</reference>
<feature type="transit peptide" description="Mitochondrion" evidence="2">
    <location>
        <begin position="1"/>
        <end status="unknown"/>
    </location>
</feature>
<feature type="chain" id="PRO_0000316240" description="Mitochondrial acidic protein mam33">
    <location>
        <begin status="unknown"/>
        <end position="269"/>
    </location>
</feature>
<name>MAM33_SCHPO</name>
<protein>
    <recommendedName>
        <fullName>Mitochondrial acidic protein mam33</fullName>
    </recommendedName>
</protein>
<evidence type="ECO:0000250" key="1"/>
<evidence type="ECO:0000255" key="2"/>
<evidence type="ECO:0000269" key="3">
    <source>
    </source>
</evidence>
<evidence type="ECO:0000305" key="4"/>
<comment type="subcellular location">
    <subcellularLocation>
        <location evidence="3">Cytoplasm</location>
    </subcellularLocation>
    <subcellularLocation>
        <location evidence="1">Mitochondrion matrix</location>
    </subcellularLocation>
</comment>
<comment type="similarity">
    <text evidence="4">Belongs to the MAM33 family.</text>
</comment>
<proteinExistence type="inferred from homology"/>
<dbReference type="EMBL" id="CU329671">
    <property type="protein sequence ID" value="CAA22880.1"/>
    <property type="molecule type" value="Genomic_DNA"/>
</dbReference>
<dbReference type="PIR" id="T40677">
    <property type="entry name" value="T40677"/>
</dbReference>
<dbReference type="SMR" id="O94675"/>
<dbReference type="FunCoup" id="O94675">
    <property type="interactions" value="119"/>
</dbReference>
<dbReference type="STRING" id="284812.O94675"/>
<dbReference type="PaxDb" id="4896-SPBC776.07.1"/>
<dbReference type="EnsemblFungi" id="SPBC776.07.1">
    <property type="protein sequence ID" value="SPBC776.07.1:pep"/>
    <property type="gene ID" value="SPBC776.07"/>
</dbReference>
<dbReference type="KEGG" id="spo:2541189"/>
<dbReference type="PomBase" id="SPBC776.07"/>
<dbReference type="VEuPathDB" id="FungiDB:SPBC776.07"/>
<dbReference type="eggNOG" id="KOG2536">
    <property type="taxonomic scope" value="Eukaryota"/>
</dbReference>
<dbReference type="HOGENOM" id="CLU_072692_0_0_1"/>
<dbReference type="InParanoid" id="O94675"/>
<dbReference type="OMA" id="QYLGPSF"/>
<dbReference type="PhylomeDB" id="O94675"/>
<dbReference type="Reactome" id="R-SPO-8980692">
    <property type="pathway name" value="RHOA GTPase cycle"/>
</dbReference>
<dbReference type="Reactome" id="R-SPO-9013106">
    <property type="pathway name" value="RHOC GTPase cycle"/>
</dbReference>
<dbReference type="PRO" id="PR:O94675"/>
<dbReference type="Proteomes" id="UP000002485">
    <property type="component" value="Chromosome II"/>
</dbReference>
<dbReference type="GO" id="GO:0005737">
    <property type="term" value="C:cytoplasm"/>
    <property type="evidence" value="ECO:0007005"/>
    <property type="project" value="PomBase"/>
</dbReference>
<dbReference type="GO" id="GO:0005759">
    <property type="term" value="C:mitochondrial matrix"/>
    <property type="evidence" value="ECO:0000266"/>
    <property type="project" value="PomBase"/>
</dbReference>
<dbReference type="GO" id="GO:0042256">
    <property type="term" value="P:cytosolic ribosome assembly"/>
    <property type="evidence" value="ECO:0000318"/>
    <property type="project" value="GO_Central"/>
</dbReference>
<dbReference type="GO" id="GO:0061668">
    <property type="term" value="P:mitochondrial ribosome assembly"/>
    <property type="evidence" value="ECO:0000266"/>
    <property type="project" value="PomBase"/>
</dbReference>
<dbReference type="Gene3D" id="3.10.280.10">
    <property type="entry name" value="Mitochondrial glycoprotein"/>
    <property type="match status" value="1"/>
</dbReference>
<dbReference type="InterPro" id="IPR003428">
    <property type="entry name" value="MAM33"/>
</dbReference>
<dbReference type="InterPro" id="IPR036561">
    <property type="entry name" value="MAM33_sf"/>
</dbReference>
<dbReference type="PANTHER" id="PTHR10826">
    <property type="entry name" value="COMPLEMENT COMPONENT 1"/>
    <property type="match status" value="1"/>
</dbReference>
<dbReference type="PANTHER" id="PTHR10826:SF1">
    <property type="entry name" value="COMPLEMENT COMPONENT 1 Q SUBCOMPONENT-BINDING PROTEIN, MITOCHONDRIAL"/>
    <property type="match status" value="1"/>
</dbReference>
<dbReference type="Pfam" id="PF02330">
    <property type="entry name" value="MAM33"/>
    <property type="match status" value="1"/>
</dbReference>
<dbReference type="SUPFAM" id="SSF54529">
    <property type="entry name" value="Mitochondrial glycoprotein MAM33-like"/>
    <property type="match status" value="1"/>
</dbReference>
<accession>O94675</accession>